<gene>
    <name evidence="16" type="primary">H6pd</name>
</gene>
<comment type="function">
    <text evidence="5 6 7 9 10">Bifunctional enzyme localized in the lumen of the endoplasmic reticulum that catalyzes the first two steps of the oxidative branch of the pentose phosphate pathway/shunt, an alternative to glycolysis and a major source of reducing power and metabolic intermediates for biosynthetic processes (PubMed:12831846, PubMed:16356929, PubMed:18222920, PubMed:4169027). Has a hexose-6-phosphate dehydrogenase activity, with broad substrate specificity compared to glucose-6-phosphate 1-dehydrogenase/G6PD, and catalyzes the first step of the pentose phosphate pathway (PubMed:12831846, PubMed:18222920, PubMed:4169027). In addition, acts as a 6-phosphogluconolactonase and catalyzes the second step of the pentose phosphate pathway (PubMed:12831846). May have a dehydrogenase activity for alternative substrates including glucosamine 6-phosphate and glucose 6-sulfate (PubMed:12831846). The main function of this enzyme is to provide reducing equivalents such as NADPH to maintain the adequate levels of reductive cofactors in the oxidizing environment of the endoplasmic reticulum (PubMed:12831846, PubMed:16356929, PubMed:17656460, PubMed:18222920). By producing NADPH that is needed by reductases of the lumen of the endoplasmic reticulum like corticosteroid 11-beta-dehydrogenase isozyme 1/HSD11B1, indirectly regulates their activity (PubMed:16356929).</text>
</comment>
<comment type="catalytic activity">
    <reaction evidence="10">
        <text>D-glucose 6-phosphate + NAD(+) = 6-phospho-D-glucono-1,5-lactone + NADH + H(+)</text>
        <dbReference type="Rhea" id="RHEA:38215"/>
        <dbReference type="ChEBI" id="CHEBI:15378"/>
        <dbReference type="ChEBI" id="CHEBI:57540"/>
        <dbReference type="ChEBI" id="CHEBI:57945"/>
        <dbReference type="ChEBI" id="CHEBI:57955"/>
        <dbReference type="ChEBI" id="CHEBI:61548"/>
        <dbReference type="EC" id="1.1.1.363"/>
    </reaction>
    <physiologicalReaction direction="left-to-right" evidence="15">
        <dbReference type="Rhea" id="RHEA:38216"/>
    </physiologicalReaction>
</comment>
<comment type="catalytic activity">
    <reaction evidence="5 10">
        <text>D-glucose 6-phosphate + NADP(+) = 6-phospho-D-glucono-1,5-lactone + NADPH + H(+)</text>
        <dbReference type="Rhea" id="RHEA:15841"/>
        <dbReference type="ChEBI" id="CHEBI:15378"/>
        <dbReference type="ChEBI" id="CHEBI:57783"/>
        <dbReference type="ChEBI" id="CHEBI:57955"/>
        <dbReference type="ChEBI" id="CHEBI:58349"/>
        <dbReference type="ChEBI" id="CHEBI:61548"/>
        <dbReference type="EC" id="1.1.1.363"/>
    </reaction>
    <physiologicalReaction direction="left-to-right" evidence="15">
        <dbReference type="Rhea" id="RHEA:15842"/>
    </physiologicalReaction>
</comment>
<comment type="catalytic activity">
    <reaction evidence="5">
        <text>6-phospho-D-glucono-1,5-lactone + H2O = 6-phospho-D-gluconate + H(+)</text>
        <dbReference type="Rhea" id="RHEA:12556"/>
        <dbReference type="ChEBI" id="CHEBI:15377"/>
        <dbReference type="ChEBI" id="CHEBI:15378"/>
        <dbReference type="ChEBI" id="CHEBI:57955"/>
        <dbReference type="ChEBI" id="CHEBI:58759"/>
        <dbReference type="EC" id="3.1.1.31"/>
    </reaction>
    <physiologicalReaction direction="left-to-right" evidence="14">
        <dbReference type="Rhea" id="RHEA:12557"/>
    </physiologicalReaction>
</comment>
<comment type="catalytic activity">
    <reaction evidence="10">
        <text>2-deoxy-D-glucose 6-phosphate + NAD(+) = 2-deoxy-6-phospho-D-glucono-1,5-lactone + NADH + H(+)</text>
        <dbReference type="Rhea" id="RHEA:62064"/>
        <dbReference type="ChEBI" id="CHEBI:15378"/>
        <dbReference type="ChEBI" id="CHEBI:57540"/>
        <dbReference type="ChEBI" id="CHEBI:57945"/>
        <dbReference type="ChEBI" id="CHEBI:84760"/>
        <dbReference type="ChEBI" id="CHEBI:145420"/>
    </reaction>
    <physiologicalReaction direction="left-to-right" evidence="15">
        <dbReference type="Rhea" id="RHEA:62065"/>
    </physiologicalReaction>
</comment>
<comment type="catalytic activity">
    <reaction evidence="5 9 10">
        <text>2-deoxy-D-glucose 6-phosphate + NADP(+) = 2-deoxy-6-phospho-D-glucono-1,5-lactone + NADPH + H(+)</text>
        <dbReference type="Rhea" id="RHEA:62068"/>
        <dbReference type="ChEBI" id="CHEBI:15378"/>
        <dbReference type="ChEBI" id="CHEBI:57783"/>
        <dbReference type="ChEBI" id="CHEBI:58349"/>
        <dbReference type="ChEBI" id="CHEBI:84760"/>
        <dbReference type="ChEBI" id="CHEBI:145420"/>
    </reaction>
    <physiologicalReaction direction="left-to-right" evidence="15">
        <dbReference type="Rhea" id="RHEA:62069"/>
    </physiologicalReaction>
</comment>
<comment type="catalytic activity">
    <reaction evidence="5 10">
        <text>D-galactose 6-phosphate + NADP(+) = 6-phospho-D-galactono-1,5-lactone + NADPH + H(+)</text>
        <dbReference type="Rhea" id="RHEA:62072"/>
        <dbReference type="ChEBI" id="CHEBI:15378"/>
        <dbReference type="ChEBI" id="CHEBI:57783"/>
        <dbReference type="ChEBI" id="CHEBI:58349"/>
        <dbReference type="ChEBI" id="CHEBI:91004"/>
        <dbReference type="ChEBI" id="CHEBI:145419"/>
    </reaction>
    <physiologicalReaction direction="left-to-right" evidence="15">
        <dbReference type="Rhea" id="RHEA:62073"/>
    </physiologicalReaction>
</comment>
<comment type="catalytic activity">
    <reaction evidence="10">
        <text>D-galactose 6-phosphate + NAD(+) = 6-phospho-D-galactono-1,5-lactone + NADH + H(+)</text>
        <dbReference type="Rhea" id="RHEA:62076"/>
        <dbReference type="ChEBI" id="CHEBI:15378"/>
        <dbReference type="ChEBI" id="CHEBI:57540"/>
        <dbReference type="ChEBI" id="CHEBI:57945"/>
        <dbReference type="ChEBI" id="CHEBI:91004"/>
        <dbReference type="ChEBI" id="CHEBI:145419"/>
    </reaction>
    <physiologicalReaction direction="left-to-right" evidence="15">
        <dbReference type="Rhea" id="RHEA:62077"/>
    </physiologicalReaction>
</comment>
<comment type="catalytic activity">
    <reaction evidence="5">
        <text>D-glucosamine 6-phosphate + NADP(+) = 2-amino-2-deoxy-6-phospho-D-glucono-1,5-lactone + NADPH + 2 H(+)</text>
        <dbReference type="Rhea" id="RHEA:62088"/>
        <dbReference type="ChEBI" id="CHEBI:15378"/>
        <dbReference type="ChEBI" id="CHEBI:57783"/>
        <dbReference type="ChEBI" id="CHEBI:58349"/>
        <dbReference type="ChEBI" id="CHEBI:58725"/>
        <dbReference type="ChEBI" id="CHEBI:145423"/>
    </reaction>
    <physiologicalReaction direction="left-to-right" evidence="14">
        <dbReference type="Rhea" id="RHEA:62089"/>
    </physiologicalReaction>
</comment>
<comment type="catalytic activity">
    <reaction evidence="10">
        <text>D-glucose + NAD(+) = D-glucono-1,5-lactone + NADH + H(+)</text>
        <dbReference type="Rhea" id="RHEA:14293"/>
        <dbReference type="ChEBI" id="CHEBI:4167"/>
        <dbReference type="ChEBI" id="CHEBI:15378"/>
        <dbReference type="ChEBI" id="CHEBI:16217"/>
        <dbReference type="ChEBI" id="CHEBI:57540"/>
        <dbReference type="ChEBI" id="CHEBI:57945"/>
        <dbReference type="EC" id="1.1.1.47"/>
    </reaction>
    <physiologicalReaction direction="left-to-right" evidence="15">
        <dbReference type="Rhea" id="RHEA:14294"/>
    </physiologicalReaction>
</comment>
<comment type="catalytic activity">
    <reaction evidence="10">
        <text>D-glucose + NADP(+) = D-glucono-1,5-lactone + NADPH + H(+)</text>
        <dbReference type="Rhea" id="RHEA:14405"/>
        <dbReference type="ChEBI" id="CHEBI:4167"/>
        <dbReference type="ChEBI" id="CHEBI:15378"/>
        <dbReference type="ChEBI" id="CHEBI:16217"/>
        <dbReference type="ChEBI" id="CHEBI:57783"/>
        <dbReference type="ChEBI" id="CHEBI:58349"/>
        <dbReference type="EC" id="1.1.1.47"/>
    </reaction>
    <physiologicalReaction direction="left-to-right" evidence="15">
        <dbReference type="Rhea" id="RHEA:14406"/>
    </physiologicalReaction>
</comment>
<comment type="catalytic activity">
    <reaction evidence="5">
        <text>D-glucose 6-sulfate + NADP(+) = 6-sulfo-D-glucono-1,5-lactone + NADPH + H(+)</text>
        <dbReference type="Rhea" id="RHEA:62080"/>
        <dbReference type="ChEBI" id="CHEBI:15378"/>
        <dbReference type="ChEBI" id="CHEBI:57783"/>
        <dbReference type="ChEBI" id="CHEBI:58349"/>
        <dbReference type="ChEBI" id="CHEBI:145424"/>
        <dbReference type="ChEBI" id="CHEBI:145427"/>
    </reaction>
    <physiologicalReaction direction="left-to-right" evidence="14">
        <dbReference type="Rhea" id="RHEA:62081"/>
    </physiologicalReaction>
</comment>
<comment type="biophysicochemical properties">
    <kinetics>
        <KM evidence="10">4065 mM for D-glucose (at pH 7.1 in the presence of NADP)</KM>
        <KM evidence="10">725 mM for D-glucose (at pH 7.1 in the presence of NAD)</KM>
        <KM evidence="10">532 mM for D-glucose (at pH 9.6 in the presence of NAD)</KM>
        <KM evidence="10">120 uM for D-glucose 6-phosphate (at pH 9.6 in the presence of NADP)</KM>
        <KM evidence="10">28 uM for D-glucose 6-phosphate (at pH 9.6 in the presence of NAD)</KM>
        <KM evidence="10">66 uM for 2-deoxy-D-glucose 6-phosphate (at pH 7.1 in the presence of NADP)</KM>
        <KM evidence="10">12 uM for 2-deoxy-D-glucose 6-phosphate (at pH 7.1 in the presence of NAD)</KM>
        <KM evidence="10">5.89 mM for 2-deoxy-D-glucose 6-phosphate (at pH 9.6 in the presence of NADP)</KM>
        <KM evidence="10">4.35 mM for 2-deoxy-D-glucose 6-phosphate (at pH 9.6 in the presence of NAD)</KM>
        <KM evidence="10">7 uM for D-galactopyranose 6-phosphate (at pH 7.1 in the presence of NADP)</KM>
        <KM evidence="10">504 uM for D-galactopyranose 6-phosphate (at pH 9.6 in the presence of NADP)</KM>
        <KM evidence="10">223 uM for D-galactopyranose 6-phosphate (at pH 7.1 in the presence of NAD)</KM>
        <KM evidence="10">9 uM for NADP (at pH 7.1 in the presence of galactose 6-phosphate)</KM>
        <KM evidence="10">14 uM for NADP (at pH 9.6 in the presence of galactose 6-phosphate)</KM>
        <KM evidence="10">4 uM for NADP (at pH 9.6 in the presence of D-glucose 6-phosphate)</KM>
        <KM evidence="10">12 uM for NADP (at pH 7.1 in the presence of D-glucose)</KM>
        <KM evidence="10">52 uM for NAD (at pH 7.1 in the presence of D-glucose)</KM>
        <KM evidence="10">47 uM for NADP (at pH 9.6 in the presence of D-glucose)</KM>
        <KM evidence="10">261 uM for NAD (at pH 9.6 in the presence of D-glucose)</KM>
        <KM evidence="10">34 uM for NAD (at pH 7.1 in the presence of D-glucose)</KM>
        <KM evidence="10">72 uM for NAD (at pH 9.6 in the presence of D-glucose)</KM>
    </kinetics>
    <phDependence>
        <text evidence="5">Optimum pH is 6.0-8.0.</text>
    </phDependence>
</comment>
<comment type="pathway">
    <text evidence="5 10">Carbohydrate degradation; pentose phosphate pathway; D-ribulose 5-phosphate from D-glucose 6-phosphate (oxidative stage).</text>
</comment>
<comment type="pathway">
    <text evidence="5">Carbohydrate degradation; pentose phosphate pathway; D-ribulose 5-phosphate from D-glucose 6-phosphate (oxidative stage): step 2/3.</text>
</comment>
<comment type="subunit">
    <text evidence="5">Homodimer.</text>
</comment>
<comment type="subcellular location">
    <subcellularLocation>
        <location evidence="14">Endoplasmic reticulum lumen</location>
    </subcellularLocation>
</comment>
<comment type="tissue specificity">
    <text evidence="8 9 10">Expressed in liver (at protein level) (PubMed:4169027). Expressed in muscles (PubMed:18222920). Expressed in adipose tissues (PubMed:18218694).</text>
</comment>
<comment type="disruption phenotype">
    <text evidence="6 7 8 9">Mice lacking H6pd are born at the expected Mendelian frequency and do not show overt phenotype (PubMed:16356929). However, they display cellular inability to convert 11-dehydrocorticosterone (11-DHC) to corticosterone and present increased corticosterone to 11-DHC conversion associated with adrenal hyperplasia (PubMed:16356929). Mutant mice also display fasting hypoglycemia and perturbed lipid mobilization that are probably due to the aforementioned effect on corticosterone metabolism and blunted intracellular action of the hormone (PubMed:17656460, PubMed:18218694). Skeletal myopathy associated with a dysregulation of the expression of proteins associated with calcium homeostasis in the sarcoplasmic reticulum and an activation of the unfolded protein response are also observed (PubMed:18222920).</text>
</comment>
<comment type="similarity">
    <text evidence="13">In the N-terminal section; belongs to the glucose-6-phosphate dehydrogenase family.</text>
</comment>
<comment type="similarity">
    <text evidence="13">In the C-terminal section; belongs to the glucosamine/galactosamine-6-phosphate isomerase family. 6-phosphogluconolactonase subfamily.</text>
</comment>
<comment type="sequence caution" evidence="13">
    <conflict type="erroneous initiation">
        <sequence resource="EMBL-CDS" id="BAC32260"/>
    </conflict>
    <text>Extended N-terminus.</text>
</comment>
<protein>
    <recommendedName>
        <fullName evidence="14">GDH/6PGL endoplasmic bifunctional protein</fullName>
    </recommendedName>
    <domain>
        <recommendedName>
            <fullName evidence="12">Hexose-6-phosphate dehydrogenase</fullName>
        </recommendedName>
        <alternativeName>
            <fullName evidence="15">Glucose 1-dehydrogenase</fullName>
            <ecNumber evidence="10">1.1.1.47</ecNumber>
        </alternativeName>
        <alternativeName>
            <fullName evidence="15">Glucose-6-phosphate dehydrogenase</fullName>
            <ecNumber evidence="5 10">1.1.1.363</ecNumber>
        </alternativeName>
    </domain>
    <domain>
        <recommendedName>
            <fullName evidence="11">6-phosphogluconolactonase</fullName>
            <shortName evidence="11">6PGL</shortName>
            <ecNumber evidence="5">3.1.1.31</ecNumber>
        </recommendedName>
    </domain>
</protein>
<dbReference type="EC" id="1.1.1.47" evidence="10"/>
<dbReference type="EC" id="1.1.1.363" evidence="5 10"/>
<dbReference type="EC" id="3.1.1.31" evidence="5"/>
<dbReference type="EMBL" id="AK045199">
    <property type="protein sequence ID" value="BAC32260.1"/>
    <property type="status" value="ALT_INIT"/>
    <property type="molecule type" value="mRNA"/>
</dbReference>
<dbReference type="EMBL" id="AK159373">
    <property type="protein sequence ID" value="BAE35029.1"/>
    <property type="molecule type" value="mRNA"/>
</dbReference>
<dbReference type="EMBL" id="AL606914">
    <property type="protein sequence ID" value="CAM16119.1"/>
    <property type="molecule type" value="Genomic_DNA"/>
</dbReference>
<dbReference type="EMBL" id="CU463327">
    <property type="protein sequence ID" value="CAQ51682.1"/>
    <property type="molecule type" value="Genomic_DNA"/>
</dbReference>
<dbReference type="EMBL" id="BC042677">
    <property type="protein sequence ID" value="AAH42677.1"/>
    <property type="molecule type" value="mRNA"/>
</dbReference>
<dbReference type="CCDS" id="CCDS71524.1"/>
<dbReference type="RefSeq" id="NP_001277933.1">
    <property type="nucleotide sequence ID" value="NM_001291004.1"/>
</dbReference>
<dbReference type="RefSeq" id="NP_775547.2">
    <property type="nucleotide sequence ID" value="NM_173371.4"/>
</dbReference>
<dbReference type="RefSeq" id="XP_036019438.1">
    <property type="nucleotide sequence ID" value="XM_036163545.1"/>
</dbReference>
<dbReference type="SMR" id="Q8CFX1"/>
<dbReference type="BioGRID" id="221399">
    <property type="interactions" value="2"/>
</dbReference>
<dbReference type="FunCoup" id="Q8CFX1">
    <property type="interactions" value="2067"/>
</dbReference>
<dbReference type="STRING" id="10090.ENSMUSP00000030830"/>
<dbReference type="GlyConnect" id="2334">
    <property type="glycosylation" value="2 N-Linked glycans (1 site)"/>
</dbReference>
<dbReference type="GlyCosmos" id="Q8CFX1">
    <property type="glycosylation" value="3 sites, 2 glycans"/>
</dbReference>
<dbReference type="GlyGen" id="Q8CFX1">
    <property type="glycosylation" value="6 sites, 3 N-linked glycans (1 site), 1 O-linked glycan (3 sites)"/>
</dbReference>
<dbReference type="iPTMnet" id="Q8CFX1"/>
<dbReference type="PhosphoSitePlus" id="Q8CFX1"/>
<dbReference type="SwissPalm" id="Q8CFX1"/>
<dbReference type="jPOST" id="Q8CFX1"/>
<dbReference type="PaxDb" id="10090-ENSMUSP00000030830"/>
<dbReference type="ProteomicsDB" id="271657"/>
<dbReference type="Pumba" id="Q8CFX1"/>
<dbReference type="Antibodypedia" id="1350">
    <property type="antibodies" value="321 antibodies from 28 providers"/>
</dbReference>
<dbReference type="DNASU" id="100198"/>
<dbReference type="Ensembl" id="ENSMUST00000084117.13">
    <property type="protein sequence ID" value="ENSMUSP00000081134.7"/>
    <property type="gene ID" value="ENSMUSG00000028980.15"/>
</dbReference>
<dbReference type="GeneID" id="100198"/>
<dbReference type="KEGG" id="mmu:100198"/>
<dbReference type="UCSC" id="uc008vxh.2">
    <property type="organism name" value="mouse"/>
</dbReference>
<dbReference type="AGR" id="MGI:2140356"/>
<dbReference type="CTD" id="9563"/>
<dbReference type="MGI" id="MGI:2140356">
    <property type="gene designation" value="H6pd"/>
</dbReference>
<dbReference type="VEuPathDB" id="HostDB:ENSMUSG00000028980"/>
<dbReference type="eggNOG" id="KOG0563">
    <property type="taxonomic scope" value="Eukaryota"/>
</dbReference>
<dbReference type="eggNOG" id="KOG3147">
    <property type="taxonomic scope" value="Eukaryota"/>
</dbReference>
<dbReference type="GeneTree" id="ENSGT00530000063435"/>
<dbReference type="HOGENOM" id="CLU_018975_0_0_1"/>
<dbReference type="InParanoid" id="Q8CFX1"/>
<dbReference type="OMA" id="APNRCAV"/>
<dbReference type="OrthoDB" id="60984at2759"/>
<dbReference type="SABIO-RK" id="Q8CFX1"/>
<dbReference type="UniPathway" id="UPA00115">
    <property type="reaction ID" value="UER00409"/>
</dbReference>
<dbReference type="BioGRID-ORCS" id="100198">
    <property type="hits" value="1 hit in 77 CRISPR screens"/>
</dbReference>
<dbReference type="PRO" id="PR:Q8CFX1"/>
<dbReference type="Proteomes" id="UP000000589">
    <property type="component" value="Chromosome 4"/>
</dbReference>
<dbReference type="RNAct" id="Q8CFX1">
    <property type="molecule type" value="protein"/>
</dbReference>
<dbReference type="Bgee" id="ENSMUSG00000028980">
    <property type="expression patterns" value="Expressed in left lobe of liver and 193 other cell types or tissues"/>
</dbReference>
<dbReference type="ExpressionAtlas" id="Q8CFX1">
    <property type="expression patterns" value="baseline and differential"/>
</dbReference>
<dbReference type="GO" id="GO:0005783">
    <property type="term" value="C:endoplasmic reticulum"/>
    <property type="evidence" value="ECO:0000315"/>
    <property type="project" value="MGI"/>
</dbReference>
<dbReference type="GO" id="GO:0005788">
    <property type="term" value="C:endoplasmic reticulum lumen"/>
    <property type="evidence" value="ECO:0000250"/>
    <property type="project" value="UniProtKB"/>
</dbReference>
<dbReference type="GO" id="GO:0016529">
    <property type="term" value="C:sarcoplasmic reticulum"/>
    <property type="evidence" value="ECO:0000315"/>
    <property type="project" value="MGI"/>
</dbReference>
<dbReference type="GO" id="GO:0017057">
    <property type="term" value="F:6-phosphogluconolactonase activity"/>
    <property type="evidence" value="ECO:0000314"/>
    <property type="project" value="MGI"/>
</dbReference>
<dbReference type="GO" id="GO:0030246">
    <property type="term" value="F:carbohydrate binding"/>
    <property type="evidence" value="ECO:0007669"/>
    <property type="project" value="Ensembl"/>
</dbReference>
<dbReference type="GO" id="GO:0047934">
    <property type="term" value="F:glucose 1-dehydrogenase (NAD+) activity"/>
    <property type="evidence" value="ECO:0007669"/>
    <property type="project" value="RHEA"/>
</dbReference>
<dbReference type="GO" id="GO:0047935">
    <property type="term" value="F:glucose 1-dehydrogenase (NADP+) activity"/>
    <property type="evidence" value="ECO:0007669"/>
    <property type="project" value="RHEA"/>
</dbReference>
<dbReference type="GO" id="GO:0004345">
    <property type="term" value="F:glucose-6-phosphate dehydrogenase activity"/>
    <property type="evidence" value="ECO:0000314"/>
    <property type="project" value="MGI"/>
</dbReference>
<dbReference type="GO" id="GO:0050661">
    <property type="term" value="F:NADP binding"/>
    <property type="evidence" value="ECO:0007669"/>
    <property type="project" value="Ensembl"/>
</dbReference>
<dbReference type="GO" id="GO:0006006">
    <property type="term" value="P:glucose metabolic process"/>
    <property type="evidence" value="ECO:0007669"/>
    <property type="project" value="UniProtKB-KW"/>
</dbReference>
<dbReference type="GO" id="GO:0006098">
    <property type="term" value="P:pentose-phosphate shunt"/>
    <property type="evidence" value="ECO:0000314"/>
    <property type="project" value="MGI"/>
</dbReference>
<dbReference type="GO" id="GO:0009051">
    <property type="term" value="P:pentose-phosphate shunt, oxidative branch"/>
    <property type="evidence" value="ECO:0000250"/>
    <property type="project" value="UniProtKB"/>
</dbReference>
<dbReference type="GO" id="GO:2000064">
    <property type="term" value="P:regulation of cortisol biosynthetic process"/>
    <property type="evidence" value="ECO:0000315"/>
    <property type="project" value="UniProtKB"/>
</dbReference>
<dbReference type="GO" id="GO:0097305">
    <property type="term" value="P:response to alcohol"/>
    <property type="evidence" value="ECO:0007669"/>
    <property type="project" value="Ensembl"/>
</dbReference>
<dbReference type="GO" id="GO:0031667">
    <property type="term" value="P:response to nutrient levels"/>
    <property type="evidence" value="ECO:0007669"/>
    <property type="project" value="Ensembl"/>
</dbReference>
<dbReference type="CDD" id="cd01400">
    <property type="entry name" value="6PGL"/>
    <property type="match status" value="1"/>
</dbReference>
<dbReference type="FunFam" id="3.30.360.10:FF:000032">
    <property type="entry name" value="GDH/6PGL endoplasmic bifunctional protein"/>
    <property type="match status" value="1"/>
</dbReference>
<dbReference type="FunFam" id="3.40.50.1360:FF:000015">
    <property type="entry name" value="Hexose-6-phosphate dehydrogenase/glucose 1-dehydrogenase"/>
    <property type="match status" value="1"/>
</dbReference>
<dbReference type="Gene3D" id="3.40.50.1360">
    <property type="match status" value="1"/>
</dbReference>
<dbReference type="Gene3D" id="3.30.360.10">
    <property type="entry name" value="Dihydrodipicolinate Reductase, domain 2"/>
    <property type="match status" value="1"/>
</dbReference>
<dbReference type="Gene3D" id="3.40.50.720">
    <property type="entry name" value="NAD(P)-binding Rossmann-like Domain"/>
    <property type="match status" value="1"/>
</dbReference>
<dbReference type="InterPro" id="IPR005900">
    <property type="entry name" value="6-phosphogluconolactonase_DevB"/>
</dbReference>
<dbReference type="InterPro" id="IPR001282">
    <property type="entry name" value="G6P_DH"/>
</dbReference>
<dbReference type="InterPro" id="IPR019796">
    <property type="entry name" value="G6P_DH_AS"/>
</dbReference>
<dbReference type="InterPro" id="IPR022675">
    <property type="entry name" value="G6P_DH_C"/>
</dbReference>
<dbReference type="InterPro" id="IPR022674">
    <property type="entry name" value="G6P_DH_NAD-bd"/>
</dbReference>
<dbReference type="InterPro" id="IPR006148">
    <property type="entry name" value="Glc/Gal-6P_isomerase"/>
</dbReference>
<dbReference type="InterPro" id="IPR036291">
    <property type="entry name" value="NAD(P)-bd_dom_sf"/>
</dbReference>
<dbReference type="InterPro" id="IPR037171">
    <property type="entry name" value="NagB/RpiA_transferase-like"/>
</dbReference>
<dbReference type="NCBIfam" id="TIGR01198">
    <property type="entry name" value="pgl"/>
    <property type="match status" value="1"/>
</dbReference>
<dbReference type="PANTHER" id="PTHR23429:SF7">
    <property type="entry name" value="GDH_6PGL ENDOPLASMIC BIFUNCTIONAL PROTEIN"/>
    <property type="match status" value="1"/>
</dbReference>
<dbReference type="PANTHER" id="PTHR23429">
    <property type="entry name" value="GLUCOSE-6-PHOSPHATE 1-DEHYDROGENASE G6PD"/>
    <property type="match status" value="1"/>
</dbReference>
<dbReference type="Pfam" id="PF02781">
    <property type="entry name" value="G6PD_C"/>
    <property type="match status" value="1"/>
</dbReference>
<dbReference type="Pfam" id="PF00479">
    <property type="entry name" value="G6PD_N"/>
    <property type="match status" value="1"/>
</dbReference>
<dbReference type="Pfam" id="PF01182">
    <property type="entry name" value="Glucosamine_iso"/>
    <property type="match status" value="1"/>
</dbReference>
<dbReference type="PRINTS" id="PR00079">
    <property type="entry name" value="G6PDHDRGNASE"/>
</dbReference>
<dbReference type="SUPFAM" id="SSF55347">
    <property type="entry name" value="Glyceraldehyde-3-phosphate dehydrogenase-like, C-terminal domain"/>
    <property type="match status" value="1"/>
</dbReference>
<dbReference type="SUPFAM" id="SSF51735">
    <property type="entry name" value="NAD(P)-binding Rossmann-fold domains"/>
    <property type="match status" value="1"/>
</dbReference>
<dbReference type="SUPFAM" id="SSF100950">
    <property type="entry name" value="NagB/RpiA/CoA transferase-like"/>
    <property type="match status" value="1"/>
</dbReference>
<dbReference type="PROSITE" id="PS00069">
    <property type="entry name" value="G6P_DEHYDROGENASE"/>
    <property type="match status" value="1"/>
</dbReference>
<proteinExistence type="evidence at protein level"/>
<sequence>MLLAAMCLALLGCLQAQELKGHVSIILLGATGDLAKKYLWQGLFQLYLDEAGKGHSFSFHGAALTAPQQGQKLMDKVLESLSCPKDLVPSRCDELKGQFLQLSQYRQLKTVEDYQTLNKDIETQVQQDGLWEAGRIFYFSVPPFAYADIARNINSSCRPHPGAWLRVVFEKPFGHDHLSAQQLASELGSFFQEEEMYRVDHYLGKQAVAQILPFRDQNRKALDGLWNRHHVERVEIILKETIDAEGRASFYEEYGVIRDTLQNHLTEILTLVAMELPLNISSSAAVLQHKLWAFQALRGLQKSSAILGQYQAYSGQVRRELQKPDGFQSLTPTFAGVLVHIDNLRWEGVPFILMSGKALDERVGYVRIVFKNRAYCTQSERHWVPEQSRCLPQQIIFYIGHGELGHPAILVSRNLFKPSLPTQKWKEVQDQPGLRLFGRPLSDYYAYRPVREQDAYSTLLSHIFHCRKESFITTENLLASWVFWTPLLDSLAFEVPRPYPGGAENGQLLDFEFSGGQLTFSQQQLEVLIPDLGSVPKPSDFQVLGARYRQSPLITAWPEELISKLASDIEAAAVQAVRHFGKFHLALSGGSSPIALFQQLATGHYSFPWAHTHLWLVDERCVPLSDPDSNFQGLQAHLLQHVRVPYYNIHPMPVHLHQRLCAEEDQGAQTYASEISALVANSSFDLVLLGMGTDGHTASLFPQSPTGLDGDQLVVLTESPFRPHQRMSLSLPLINRAKKVAVLVMGRTKREITTLVSRVGHEPKKWPISGVVPLSGQLVWYMDYEAFLG</sequence>
<keyword id="KW-0119">Carbohydrate metabolism</keyword>
<keyword id="KW-0256">Endoplasmic reticulum</keyword>
<keyword id="KW-0313">Glucose metabolism</keyword>
<keyword id="KW-0325">Glycoprotein</keyword>
<keyword id="KW-0378">Hydrolase</keyword>
<keyword id="KW-0511">Multifunctional enzyme</keyword>
<keyword id="KW-0520">NAD</keyword>
<keyword id="KW-0521">NADP</keyword>
<keyword id="KW-0560">Oxidoreductase</keyword>
<keyword id="KW-0873">Pyrrolidone carboxylic acid</keyword>
<keyword id="KW-1185">Reference proteome</keyword>
<keyword id="KW-0732">Signal</keyword>
<evidence type="ECO:0000250" key="1">
    <source>
        <dbReference type="UniProtKB" id="P11411"/>
    </source>
</evidence>
<evidence type="ECO:0000250" key="2">
    <source>
        <dbReference type="UniProtKB" id="P11413"/>
    </source>
</evidence>
<evidence type="ECO:0000250" key="3">
    <source>
        <dbReference type="UniProtKB" id="P56201"/>
    </source>
</evidence>
<evidence type="ECO:0000255" key="4"/>
<evidence type="ECO:0000269" key="5">
    <source>
    </source>
</evidence>
<evidence type="ECO:0000269" key="6">
    <source>
    </source>
</evidence>
<evidence type="ECO:0000269" key="7">
    <source>
    </source>
</evidence>
<evidence type="ECO:0000269" key="8">
    <source>
    </source>
</evidence>
<evidence type="ECO:0000269" key="9">
    <source>
    </source>
</evidence>
<evidence type="ECO:0000269" key="10">
    <source>
    </source>
</evidence>
<evidence type="ECO:0000303" key="11">
    <source>
    </source>
</evidence>
<evidence type="ECO:0000303" key="12">
    <source>
    </source>
</evidence>
<evidence type="ECO:0000305" key="13"/>
<evidence type="ECO:0000305" key="14">
    <source>
    </source>
</evidence>
<evidence type="ECO:0000305" key="15">
    <source>
    </source>
</evidence>
<evidence type="ECO:0000312" key="16">
    <source>
        <dbReference type="MGI" id="MGI:2140356"/>
    </source>
</evidence>
<evidence type="ECO:0007744" key="17">
    <source>
    </source>
</evidence>
<name>G6PE_MOUSE</name>
<accession>Q8CFX1</accession>
<accession>A2A7A9</accession>
<accession>B2KGW7</accession>
<accession>Q8BLH1</accession>
<organism>
    <name type="scientific">Mus musculus</name>
    <name type="common">Mouse</name>
    <dbReference type="NCBI Taxonomy" id="10090"/>
    <lineage>
        <taxon>Eukaryota</taxon>
        <taxon>Metazoa</taxon>
        <taxon>Chordata</taxon>
        <taxon>Craniata</taxon>
        <taxon>Vertebrata</taxon>
        <taxon>Euteleostomi</taxon>
        <taxon>Mammalia</taxon>
        <taxon>Eutheria</taxon>
        <taxon>Euarchontoglires</taxon>
        <taxon>Glires</taxon>
        <taxon>Rodentia</taxon>
        <taxon>Myomorpha</taxon>
        <taxon>Muroidea</taxon>
        <taxon>Muridae</taxon>
        <taxon>Murinae</taxon>
        <taxon>Mus</taxon>
        <taxon>Mus</taxon>
    </lineage>
</organism>
<reference key="1">
    <citation type="journal article" date="2005" name="Science">
        <title>The transcriptional landscape of the mammalian genome.</title>
        <authorList>
            <person name="Carninci P."/>
            <person name="Kasukawa T."/>
            <person name="Katayama S."/>
            <person name="Gough J."/>
            <person name="Frith M.C."/>
            <person name="Maeda N."/>
            <person name="Oyama R."/>
            <person name="Ravasi T."/>
            <person name="Lenhard B."/>
            <person name="Wells C."/>
            <person name="Kodzius R."/>
            <person name="Shimokawa K."/>
            <person name="Bajic V.B."/>
            <person name="Brenner S.E."/>
            <person name="Batalov S."/>
            <person name="Forrest A.R."/>
            <person name="Zavolan M."/>
            <person name="Davis M.J."/>
            <person name="Wilming L.G."/>
            <person name="Aidinis V."/>
            <person name="Allen J.E."/>
            <person name="Ambesi-Impiombato A."/>
            <person name="Apweiler R."/>
            <person name="Aturaliya R.N."/>
            <person name="Bailey T.L."/>
            <person name="Bansal M."/>
            <person name="Baxter L."/>
            <person name="Beisel K.W."/>
            <person name="Bersano T."/>
            <person name="Bono H."/>
            <person name="Chalk A.M."/>
            <person name="Chiu K.P."/>
            <person name="Choudhary V."/>
            <person name="Christoffels A."/>
            <person name="Clutterbuck D.R."/>
            <person name="Crowe M.L."/>
            <person name="Dalla E."/>
            <person name="Dalrymple B.P."/>
            <person name="de Bono B."/>
            <person name="Della Gatta G."/>
            <person name="di Bernardo D."/>
            <person name="Down T."/>
            <person name="Engstrom P."/>
            <person name="Fagiolini M."/>
            <person name="Faulkner G."/>
            <person name="Fletcher C.F."/>
            <person name="Fukushima T."/>
            <person name="Furuno M."/>
            <person name="Futaki S."/>
            <person name="Gariboldi M."/>
            <person name="Georgii-Hemming P."/>
            <person name="Gingeras T.R."/>
            <person name="Gojobori T."/>
            <person name="Green R.E."/>
            <person name="Gustincich S."/>
            <person name="Harbers M."/>
            <person name="Hayashi Y."/>
            <person name="Hensch T.K."/>
            <person name="Hirokawa N."/>
            <person name="Hill D."/>
            <person name="Huminiecki L."/>
            <person name="Iacono M."/>
            <person name="Ikeo K."/>
            <person name="Iwama A."/>
            <person name="Ishikawa T."/>
            <person name="Jakt M."/>
            <person name="Kanapin A."/>
            <person name="Katoh M."/>
            <person name="Kawasawa Y."/>
            <person name="Kelso J."/>
            <person name="Kitamura H."/>
            <person name="Kitano H."/>
            <person name="Kollias G."/>
            <person name="Krishnan S.P."/>
            <person name="Kruger A."/>
            <person name="Kummerfeld S.K."/>
            <person name="Kurochkin I.V."/>
            <person name="Lareau L.F."/>
            <person name="Lazarevic D."/>
            <person name="Lipovich L."/>
            <person name="Liu J."/>
            <person name="Liuni S."/>
            <person name="McWilliam S."/>
            <person name="Madan Babu M."/>
            <person name="Madera M."/>
            <person name="Marchionni L."/>
            <person name="Matsuda H."/>
            <person name="Matsuzawa S."/>
            <person name="Miki H."/>
            <person name="Mignone F."/>
            <person name="Miyake S."/>
            <person name="Morris K."/>
            <person name="Mottagui-Tabar S."/>
            <person name="Mulder N."/>
            <person name="Nakano N."/>
            <person name="Nakauchi H."/>
            <person name="Ng P."/>
            <person name="Nilsson R."/>
            <person name="Nishiguchi S."/>
            <person name="Nishikawa S."/>
            <person name="Nori F."/>
            <person name="Ohara O."/>
            <person name="Okazaki Y."/>
            <person name="Orlando V."/>
            <person name="Pang K.C."/>
            <person name="Pavan W.J."/>
            <person name="Pavesi G."/>
            <person name="Pesole G."/>
            <person name="Petrovsky N."/>
            <person name="Piazza S."/>
            <person name="Reed J."/>
            <person name="Reid J.F."/>
            <person name="Ring B.Z."/>
            <person name="Ringwald M."/>
            <person name="Rost B."/>
            <person name="Ruan Y."/>
            <person name="Salzberg S.L."/>
            <person name="Sandelin A."/>
            <person name="Schneider C."/>
            <person name="Schoenbach C."/>
            <person name="Sekiguchi K."/>
            <person name="Semple C.A."/>
            <person name="Seno S."/>
            <person name="Sessa L."/>
            <person name="Sheng Y."/>
            <person name="Shibata Y."/>
            <person name="Shimada H."/>
            <person name="Shimada K."/>
            <person name="Silva D."/>
            <person name="Sinclair B."/>
            <person name="Sperling S."/>
            <person name="Stupka E."/>
            <person name="Sugiura K."/>
            <person name="Sultana R."/>
            <person name="Takenaka Y."/>
            <person name="Taki K."/>
            <person name="Tammoja K."/>
            <person name="Tan S.L."/>
            <person name="Tang S."/>
            <person name="Taylor M.S."/>
            <person name="Tegner J."/>
            <person name="Teichmann S.A."/>
            <person name="Ueda H.R."/>
            <person name="van Nimwegen E."/>
            <person name="Verardo R."/>
            <person name="Wei C.L."/>
            <person name="Yagi K."/>
            <person name="Yamanishi H."/>
            <person name="Zabarovsky E."/>
            <person name="Zhu S."/>
            <person name="Zimmer A."/>
            <person name="Hide W."/>
            <person name="Bult C."/>
            <person name="Grimmond S.M."/>
            <person name="Teasdale R.D."/>
            <person name="Liu E.T."/>
            <person name="Brusic V."/>
            <person name="Quackenbush J."/>
            <person name="Wahlestedt C."/>
            <person name="Mattick J.S."/>
            <person name="Hume D.A."/>
            <person name="Kai C."/>
            <person name="Sasaki D."/>
            <person name="Tomaru Y."/>
            <person name="Fukuda S."/>
            <person name="Kanamori-Katayama M."/>
            <person name="Suzuki M."/>
            <person name="Aoki J."/>
            <person name="Arakawa T."/>
            <person name="Iida J."/>
            <person name="Imamura K."/>
            <person name="Itoh M."/>
            <person name="Kato T."/>
            <person name="Kawaji H."/>
            <person name="Kawagashira N."/>
            <person name="Kawashima T."/>
            <person name="Kojima M."/>
            <person name="Kondo S."/>
            <person name="Konno H."/>
            <person name="Nakano K."/>
            <person name="Ninomiya N."/>
            <person name="Nishio T."/>
            <person name="Okada M."/>
            <person name="Plessy C."/>
            <person name="Shibata K."/>
            <person name="Shiraki T."/>
            <person name="Suzuki S."/>
            <person name="Tagami M."/>
            <person name="Waki K."/>
            <person name="Watahiki A."/>
            <person name="Okamura-Oho Y."/>
            <person name="Suzuki H."/>
            <person name="Kawai J."/>
            <person name="Hayashizaki Y."/>
        </authorList>
    </citation>
    <scope>NUCLEOTIDE SEQUENCE [LARGE SCALE MRNA]</scope>
    <source>
        <strain>C57BL/6J</strain>
    </source>
</reference>
<reference key="2">
    <citation type="journal article" date="2009" name="PLoS Biol.">
        <title>Lineage-specific biology revealed by a finished genome assembly of the mouse.</title>
        <authorList>
            <person name="Church D.M."/>
            <person name="Goodstadt L."/>
            <person name="Hillier L.W."/>
            <person name="Zody M.C."/>
            <person name="Goldstein S."/>
            <person name="She X."/>
            <person name="Bult C.J."/>
            <person name="Agarwala R."/>
            <person name="Cherry J.L."/>
            <person name="DiCuccio M."/>
            <person name="Hlavina W."/>
            <person name="Kapustin Y."/>
            <person name="Meric P."/>
            <person name="Maglott D."/>
            <person name="Birtle Z."/>
            <person name="Marques A.C."/>
            <person name="Graves T."/>
            <person name="Zhou S."/>
            <person name="Teague B."/>
            <person name="Potamousis K."/>
            <person name="Churas C."/>
            <person name="Place M."/>
            <person name="Herschleb J."/>
            <person name="Runnheim R."/>
            <person name="Forrest D."/>
            <person name="Amos-Landgraf J."/>
            <person name="Schwartz D.C."/>
            <person name="Cheng Z."/>
            <person name="Lindblad-Toh K."/>
            <person name="Eichler E.E."/>
            <person name="Ponting C.P."/>
        </authorList>
    </citation>
    <scope>NUCLEOTIDE SEQUENCE [LARGE SCALE GENOMIC DNA]</scope>
    <source>
        <strain>C57BL/6J</strain>
    </source>
</reference>
<reference key="3">
    <citation type="journal article" date="2004" name="Genome Res.">
        <title>The status, quality, and expansion of the NIH full-length cDNA project: the Mammalian Gene Collection (MGC).</title>
        <authorList>
            <consortium name="The MGC Project Team"/>
        </authorList>
    </citation>
    <scope>NUCLEOTIDE SEQUENCE [LARGE SCALE MRNA]</scope>
    <source>
        <strain>FVB/N</strain>
        <tissue>Liver</tissue>
    </source>
</reference>
<reference key="4">
    <citation type="journal article" date="1967" name="J. Biol. Chem.">
        <title>Localization and characteristics of hexose 6-phosphate dehydrogenase (glucose dehydrogenase).</title>
        <authorList>
            <person name="Beutler E."/>
            <person name="Morrison M."/>
        </authorList>
    </citation>
    <scope>FUNCTION</scope>
    <scope>CATALYTIC ACTIVITY</scope>
    <scope>BIOPHYSICOCHEMICAL PROPERTIES</scope>
    <scope>SUBSTRATE SPECIFICITY</scope>
    <scope>PATHWAY</scope>
    <scope>TISSUE SPECIFICITY</scope>
</reference>
<reference key="5">
    <citation type="journal article" date="2003" name="Arch. Biochem. Biophys.">
        <title>Murine hexose-6-phosphate dehydrogenase: a bifunctional enzyme with broad substrate specificity and 6-phosphogluconolactonase activity.</title>
        <authorList>
            <person name="Clarke J.L."/>
            <person name="Mason P.J."/>
        </authorList>
    </citation>
    <scope>FUNCTION</scope>
    <scope>CATALYTIC ACTIVITY</scope>
    <scope>SUBSTRATE SPECIFICITY</scope>
    <scope>BIOPHYSICOCHEMICAL PROPERTIES</scope>
    <scope>PATHWAY</scope>
    <scope>SUBUNIT</scope>
    <scope>SUBCELLULAR LOCATION</scope>
</reference>
<reference key="6">
    <citation type="journal article" date="2006" name="J. Biol. Chem.">
        <title>Hexose-6-phosphate dehydrogenase knock-out mice lack 11 beta-hydroxysteroid dehydrogenase type 1-mediated glucocorticoid generation.</title>
        <authorList>
            <person name="Lavery G.G."/>
            <person name="Walker E.A."/>
            <person name="Draper N."/>
            <person name="Jeyasuria P."/>
            <person name="Marcos J."/>
            <person name="Shackleton C.H."/>
            <person name="Parker K.L."/>
            <person name="White P.C."/>
            <person name="Stewart P.M."/>
        </authorList>
    </citation>
    <scope>FUNCTION</scope>
    <scope>DISRUPTION PHENOTYPE</scope>
</reference>
<reference key="7">
    <citation type="journal article" date="2007" name="Endocrinology">
        <title>Abnormalities of glucose homeostasis and the hypothalamic-pituitary-adrenal axis in mice lacking hexose-6-phosphate dehydrogenase.</title>
        <authorList>
            <person name="Rogoff D."/>
            <person name="Ryder J.W."/>
            <person name="Black K."/>
            <person name="Yan Z."/>
            <person name="Burgess S.C."/>
            <person name="McMillan D.R."/>
            <person name="White P.C."/>
        </authorList>
    </citation>
    <scope>FUNCTION</scope>
    <scope>DISRUPTION PHENOTYPE</scope>
</reference>
<reference key="8">
    <citation type="journal article" date="2008" name="Endocrinology">
        <title>Lack of hexose-6-phosphate dehydrogenase impairs lipid mobilization from mouse adipose tissue.</title>
        <authorList>
            <person name="Bujalska I.J."/>
            <person name="Hewitt K.N."/>
            <person name="Hauton D."/>
            <person name="Lavery G.G."/>
            <person name="Tomlinson J.W."/>
            <person name="Walker E.A."/>
            <person name="Stewart P.M."/>
        </authorList>
    </citation>
    <scope>TISSUE SPECIFICITY</scope>
    <scope>DISRUPTION PHENOTYPE</scope>
</reference>
<reference key="9">
    <citation type="journal article" date="2008" name="J. Biol. Chem.">
        <title>Deletion of hexose-6-phosphate dehydrogenase activates the unfolded protein response pathway and induces skeletal myopathy.</title>
        <authorList>
            <person name="Lavery G.G."/>
            <person name="Walker E.A."/>
            <person name="Turan N."/>
            <person name="Rogoff D."/>
            <person name="Ryder J.W."/>
            <person name="Shelton J.M."/>
            <person name="Richardson J.A."/>
            <person name="Falciani F."/>
            <person name="White P.C."/>
            <person name="Stewart P.M."/>
            <person name="Parker K.L."/>
            <person name="McMillan D.R."/>
        </authorList>
    </citation>
    <scope>FUNCTION</scope>
    <scope>CATALYTIC ACTIVITY</scope>
    <scope>TISSUE SPECIFICITY</scope>
    <scope>DISRUPTION PHENOTYPE</scope>
</reference>
<reference key="10">
    <citation type="journal article" date="2010" name="Cell">
        <title>A tissue-specific atlas of mouse protein phosphorylation and expression.</title>
        <authorList>
            <person name="Huttlin E.L."/>
            <person name="Jedrychowski M.P."/>
            <person name="Elias J.E."/>
            <person name="Goswami T."/>
            <person name="Rad R."/>
            <person name="Beausoleil S.A."/>
            <person name="Villen J."/>
            <person name="Haas W."/>
            <person name="Sowa M.E."/>
            <person name="Gygi S.P."/>
        </authorList>
    </citation>
    <scope>IDENTIFICATION BY MASS SPECTROMETRY [LARGE SCALE ANALYSIS]</scope>
    <source>
        <tissue>Brown adipose tissue</tissue>
        <tissue>Heart</tissue>
        <tissue>Kidney</tissue>
        <tissue>Liver</tissue>
        <tissue>Lung</tissue>
        <tissue>Pancreas</tissue>
        <tissue>Spleen</tissue>
        <tissue>Testis</tissue>
    </source>
</reference>
<reference key="11">
    <citation type="journal article" date="2013" name="Mol. Cell">
        <title>SIRT5-mediated lysine desuccinylation impacts diverse metabolic pathways.</title>
        <authorList>
            <person name="Park J."/>
            <person name="Chen Y."/>
            <person name="Tishkoff D.X."/>
            <person name="Peng C."/>
            <person name="Tan M."/>
            <person name="Dai L."/>
            <person name="Xie Z."/>
            <person name="Zhang Y."/>
            <person name="Zwaans B.M."/>
            <person name="Skinner M.E."/>
            <person name="Lombard D.B."/>
            <person name="Zhao Y."/>
        </authorList>
    </citation>
    <scope>SUCCINYLATION [LARGE SCALE ANALYSIS] AT LYS-205 AND LYS-424</scope>
    <scope>IDENTIFICATION BY MASS SPECTROMETRY [LARGE SCALE ANALYSIS]</scope>
    <source>
        <tissue>Liver</tissue>
    </source>
</reference>
<feature type="signal peptide" evidence="3">
    <location>
        <begin position="1"/>
        <end position="16"/>
    </location>
</feature>
<feature type="chain" id="PRO_0000236794" description="GDH/6PGL endoplasmic bifunctional protein">
    <location>
        <begin position="17"/>
        <end position="789"/>
    </location>
</feature>
<feature type="region of interest" description="Hexose-6-phosphate dehydrogenase" evidence="13">
    <location>
        <begin position="17"/>
        <end position="524"/>
    </location>
</feature>
<feature type="region of interest" description="Linker" evidence="13">
    <location>
        <begin position="525"/>
        <end position="538"/>
    </location>
</feature>
<feature type="region of interest" description="6-phosphogluconolactonase" evidence="13">
    <location>
        <begin position="539"/>
        <end position="789"/>
    </location>
</feature>
<feature type="active site" description="Proton acceptor" evidence="1">
    <location>
        <position position="264"/>
    </location>
</feature>
<feature type="binding site" evidence="2">
    <location>
        <begin position="29"/>
        <end position="36"/>
    </location>
    <ligand>
        <name>NADP(+)</name>
        <dbReference type="ChEBI" id="CHEBI:58349"/>
        <label>1</label>
    </ligand>
</feature>
<feature type="binding site" evidence="2">
    <location>
        <position position="146"/>
    </location>
    <ligand>
        <name>NADP(+)</name>
        <dbReference type="ChEBI" id="CHEBI:58349"/>
        <label>1</label>
    </ligand>
</feature>
<feature type="binding site" evidence="2">
    <location>
        <position position="171"/>
    </location>
    <ligand>
        <name>D-glucose 6-phosphate</name>
        <dbReference type="ChEBI" id="CHEBI:61548"/>
    </ligand>
</feature>
<feature type="binding site" evidence="2">
    <location>
        <position position="171"/>
    </location>
    <ligand>
        <name>NADP(+)</name>
        <dbReference type="ChEBI" id="CHEBI:58349"/>
        <label>1</label>
    </ligand>
</feature>
<feature type="binding site" evidence="2">
    <location>
        <begin position="201"/>
        <end position="205"/>
    </location>
    <ligand>
        <name>D-glucose 6-phosphate</name>
        <dbReference type="ChEBI" id="CHEBI:61548"/>
    </ligand>
</feature>
<feature type="binding site" evidence="2">
    <location>
        <position position="240"/>
    </location>
    <ligand>
        <name>D-glucose 6-phosphate</name>
        <dbReference type="ChEBI" id="CHEBI:61548"/>
    </ligand>
</feature>
<feature type="binding site" evidence="2">
    <location>
        <position position="259"/>
    </location>
    <ligand>
        <name>D-glucose 6-phosphate</name>
        <dbReference type="ChEBI" id="CHEBI:61548"/>
    </ligand>
</feature>
<feature type="binding site" evidence="2">
    <location>
        <position position="357"/>
    </location>
    <ligand>
        <name>D-glucose 6-phosphate</name>
        <dbReference type="ChEBI" id="CHEBI:61548"/>
    </ligand>
</feature>
<feature type="binding site" evidence="2">
    <location>
        <position position="362"/>
    </location>
    <ligand>
        <name>D-glucose 6-phosphate</name>
        <dbReference type="ChEBI" id="CHEBI:61548"/>
    </ligand>
</feature>
<feature type="binding site" evidence="2">
    <location>
        <position position="367"/>
    </location>
    <ligand>
        <name>NADP(+)</name>
        <dbReference type="ChEBI" id="CHEBI:58349"/>
        <label>2</label>
    </ligand>
</feature>
<feature type="binding site" evidence="2">
    <location>
        <position position="615"/>
    </location>
    <ligand>
        <name>NADP(+)</name>
        <dbReference type="ChEBI" id="CHEBI:58349"/>
        <label>2</label>
    </ligand>
</feature>
<feature type="modified residue" description="Pyrrolidone carboxylic acid" evidence="3">
    <location>
        <position position="17"/>
    </location>
</feature>
<feature type="modified residue" description="N6-succinyllysine" evidence="17">
    <location>
        <position position="205"/>
    </location>
</feature>
<feature type="modified residue" description="N6-succinyllysine" evidence="17">
    <location>
        <position position="424"/>
    </location>
</feature>
<feature type="glycosylation site" description="N-linked (GlcNAc...) asparagine" evidence="4">
    <location>
        <position position="154"/>
    </location>
</feature>
<feature type="glycosylation site" description="N-linked (GlcNAc...) asparagine" evidence="4">
    <location>
        <position position="279"/>
    </location>
</feature>
<feature type="glycosylation site" description="N-linked (GlcNAc...) asparagine" evidence="4">
    <location>
        <position position="681"/>
    </location>
</feature>
<feature type="sequence conflict" description="In Ref. 1; BAE35029, 2; CAQ51682 and 3; AAH42677." evidence="13" ref="1 2 3">
    <original>V</original>
    <variation>A</variation>
    <location>
        <position position="77"/>
    </location>
</feature>
<feature type="sequence conflict" description="In Ref. 1; BAE35029, 2; CAQ51682 and 3; AAH42677." evidence="13" ref="1 2 3">
    <original>R</original>
    <variation>H</variation>
    <location>
        <position position="106"/>
    </location>
</feature>
<feature type="sequence conflict" description="In Ref. 1; BAE35029, 2; CAQ51682 and 3; AAH42677." evidence="13" ref="1 2 3">
    <original>A</original>
    <variation>T</variation>
    <location>
        <position position="285"/>
    </location>
</feature>